<protein>
    <recommendedName>
        <fullName>Rhodopsin</fullName>
    </recommendedName>
</protein>
<dbReference type="EMBL" id="Y18667">
    <property type="protein sequence ID" value="CAA77249.1"/>
    <property type="molecule type" value="mRNA"/>
</dbReference>
<dbReference type="SMR" id="Q9YH00"/>
<dbReference type="GlyCosmos" id="Q9YH00">
    <property type="glycosylation" value="3 sites, No reported glycans"/>
</dbReference>
<dbReference type="GO" id="GO:0016020">
    <property type="term" value="C:membrane"/>
    <property type="evidence" value="ECO:0000250"/>
    <property type="project" value="UniProtKB"/>
</dbReference>
<dbReference type="GO" id="GO:0097381">
    <property type="term" value="C:photoreceptor disc membrane"/>
    <property type="evidence" value="ECO:0000250"/>
    <property type="project" value="UniProtKB"/>
</dbReference>
<dbReference type="GO" id="GO:0005886">
    <property type="term" value="C:plasma membrane"/>
    <property type="evidence" value="ECO:0000250"/>
    <property type="project" value="UniProtKB"/>
</dbReference>
<dbReference type="GO" id="GO:0005502">
    <property type="term" value="F:11-cis retinal binding"/>
    <property type="evidence" value="ECO:0000250"/>
    <property type="project" value="UniProtKB"/>
</dbReference>
<dbReference type="GO" id="GO:0008020">
    <property type="term" value="F:G protein-coupled photoreceptor activity"/>
    <property type="evidence" value="ECO:0000250"/>
    <property type="project" value="UniProtKB"/>
</dbReference>
<dbReference type="GO" id="GO:0016038">
    <property type="term" value="P:absorption of visible light"/>
    <property type="evidence" value="ECO:0000250"/>
    <property type="project" value="UniProtKB"/>
</dbReference>
<dbReference type="GO" id="GO:0016056">
    <property type="term" value="P:G protein-coupled opsin signaling pathway"/>
    <property type="evidence" value="ECO:0000250"/>
    <property type="project" value="UniProtKB"/>
</dbReference>
<dbReference type="GO" id="GO:0007601">
    <property type="term" value="P:visual perception"/>
    <property type="evidence" value="ECO:0007669"/>
    <property type="project" value="UniProtKB-KW"/>
</dbReference>
<dbReference type="CDD" id="cd15080">
    <property type="entry name" value="7tmA_MWS_opsin"/>
    <property type="match status" value="1"/>
</dbReference>
<dbReference type="FunFam" id="1.20.1070.10:FF:000018">
    <property type="entry name" value="Rhodopsin"/>
    <property type="match status" value="1"/>
</dbReference>
<dbReference type="Gene3D" id="1.20.1070.10">
    <property type="entry name" value="Rhodopsin 7-helix transmembrane proteins"/>
    <property type="match status" value="1"/>
</dbReference>
<dbReference type="InterPro" id="IPR050125">
    <property type="entry name" value="GPCR_opsins"/>
</dbReference>
<dbReference type="InterPro" id="IPR000276">
    <property type="entry name" value="GPCR_Rhodpsn"/>
</dbReference>
<dbReference type="InterPro" id="IPR017452">
    <property type="entry name" value="GPCR_Rhodpsn_7TM"/>
</dbReference>
<dbReference type="InterPro" id="IPR001760">
    <property type="entry name" value="Opsin"/>
</dbReference>
<dbReference type="InterPro" id="IPR027430">
    <property type="entry name" value="Retinal_BS"/>
</dbReference>
<dbReference type="InterPro" id="IPR000732">
    <property type="entry name" value="Rhodopsin"/>
</dbReference>
<dbReference type="InterPro" id="IPR019477">
    <property type="entry name" value="Rhodopsin_N"/>
</dbReference>
<dbReference type="PANTHER" id="PTHR24240">
    <property type="entry name" value="OPSIN"/>
    <property type="match status" value="1"/>
</dbReference>
<dbReference type="Pfam" id="PF00001">
    <property type="entry name" value="7tm_1"/>
    <property type="match status" value="1"/>
</dbReference>
<dbReference type="Pfam" id="PF10413">
    <property type="entry name" value="Rhodopsin_N"/>
    <property type="match status" value="1"/>
</dbReference>
<dbReference type="PRINTS" id="PR00237">
    <property type="entry name" value="GPCRRHODOPSN"/>
</dbReference>
<dbReference type="PRINTS" id="PR00238">
    <property type="entry name" value="OPSIN"/>
</dbReference>
<dbReference type="PRINTS" id="PR00579">
    <property type="entry name" value="RHODOPSIN"/>
</dbReference>
<dbReference type="SUPFAM" id="SSF81321">
    <property type="entry name" value="Family A G protein-coupled receptor-like"/>
    <property type="match status" value="1"/>
</dbReference>
<dbReference type="PROSITE" id="PS00237">
    <property type="entry name" value="G_PROTEIN_RECEP_F1_1"/>
    <property type="match status" value="1"/>
</dbReference>
<dbReference type="PROSITE" id="PS50262">
    <property type="entry name" value="G_PROTEIN_RECEP_F1_2"/>
    <property type="match status" value="1"/>
</dbReference>
<dbReference type="PROSITE" id="PS00238">
    <property type="entry name" value="OPSIN"/>
    <property type="match status" value="1"/>
</dbReference>
<organism>
    <name type="scientific">Lithognathus mormyrus</name>
    <name type="common">Striped seabream</name>
    <name type="synonym">Sparus mormyrus</name>
    <dbReference type="NCBI Taxonomy" id="50591"/>
    <lineage>
        <taxon>Eukaryota</taxon>
        <taxon>Metazoa</taxon>
        <taxon>Chordata</taxon>
        <taxon>Craniata</taxon>
        <taxon>Vertebrata</taxon>
        <taxon>Euteleostomi</taxon>
        <taxon>Actinopterygii</taxon>
        <taxon>Neopterygii</taxon>
        <taxon>Teleostei</taxon>
        <taxon>Neoteleostei</taxon>
        <taxon>Acanthomorphata</taxon>
        <taxon>Eupercaria</taxon>
        <taxon>Spariformes</taxon>
        <taxon>Sparidae</taxon>
        <taxon>Lithognathus</taxon>
    </lineage>
</organism>
<sequence>MNGTEGPYFYVPMVNTSGIVRSPYEYPQYYLVNPAAYAALGAYMFLLILVGFPINFLTLYVTIEHKKLRTPLNYILLNLAVADLFMVFGGFTTTMYTSMHGYFVLGRLGCNIEGFFATLGGEIALWSLVVLAIERWVVVCKPISNFRFGENHAIMGLAFTWLMAMACAAPPLVGWSRYIPEGMQCSCGIDYYTRAEGFNNESFVIYMFVCHFLIPLMVVFFCYGRLLCAVKEAAAAQQESETTQRAEREVTRMVVIMVIAFLICWCPYAGVAWWIFTHQGSDFGPVFMTIPAFFAKSSSIYNPMIYICLNKQFRHCMITTLCCGKNPFEEEEGASTASKTEASSVSSSSVSPA</sequence>
<keyword id="KW-0966">Cell projection</keyword>
<keyword id="KW-0157">Chromophore</keyword>
<keyword id="KW-1015">Disulfide bond</keyword>
<keyword id="KW-0297">G-protein coupled receptor</keyword>
<keyword id="KW-0325">Glycoprotein</keyword>
<keyword id="KW-0449">Lipoprotein</keyword>
<keyword id="KW-0472">Membrane</keyword>
<keyword id="KW-0564">Palmitate</keyword>
<keyword id="KW-0597">Phosphoprotein</keyword>
<keyword id="KW-0600">Photoreceptor protein</keyword>
<keyword id="KW-0675">Receptor</keyword>
<keyword id="KW-0681">Retinal protein</keyword>
<keyword id="KW-0716">Sensory transduction</keyword>
<keyword id="KW-0807">Transducer</keyword>
<keyword id="KW-0812">Transmembrane</keyword>
<keyword id="KW-1133">Transmembrane helix</keyword>
<keyword id="KW-0844">Vision</keyword>
<name>OPSD_LITMO</name>
<reference key="1">
    <citation type="submission" date="1999-01" db="EMBL/GenBank/DDBJ databases">
        <title>Comparative analysis of opsins in Mediterranian coastal fish.</title>
        <authorList>
            <person name="Archer S.N."/>
            <person name="Hirano J."/>
        </authorList>
    </citation>
    <scope>NUCLEOTIDE SEQUENCE [MRNA]</scope>
    <source>
        <tissue>Retina</tissue>
    </source>
</reference>
<evidence type="ECO:0000250" key="1">
    <source>
        <dbReference type="UniProtKB" id="P02699"/>
    </source>
</evidence>
<evidence type="ECO:0000250" key="2">
    <source>
        <dbReference type="UniProtKB" id="P08100"/>
    </source>
</evidence>
<evidence type="ECO:0000250" key="3">
    <source>
        <dbReference type="UniProtKB" id="P32309"/>
    </source>
</evidence>
<evidence type="ECO:0000250" key="4">
    <source>
        <dbReference type="UniProtKB" id="P35359"/>
    </source>
</evidence>
<evidence type="ECO:0000255" key="5"/>
<evidence type="ECO:0000255" key="6">
    <source>
        <dbReference type="PROSITE-ProRule" id="PRU00521"/>
    </source>
</evidence>
<evidence type="ECO:0000256" key="7">
    <source>
        <dbReference type="SAM" id="MobiDB-lite"/>
    </source>
</evidence>
<evidence type="ECO:0000305" key="8"/>
<gene>
    <name type="primary">rho</name>
</gene>
<accession>Q9YH00</accession>
<feature type="chain" id="PRO_0000197681" description="Rhodopsin">
    <location>
        <begin position="1"/>
        <end position="353"/>
    </location>
</feature>
<feature type="topological domain" description="Extracellular" evidence="8">
    <location>
        <begin position="1"/>
        <end position="36"/>
    </location>
</feature>
<feature type="transmembrane region" description="Helical; Name=1" evidence="1">
    <location>
        <begin position="37"/>
        <end position="61"/>
    </location>
</feature>
<feature type="topological domain" description="Cytoplasmic" evidence="8">
    <location>
        <begin position="62"/>
        <end position="73"/>
    </location>
</feature>
<feature type="transmembrane region" description="Helical; Name=2" evidence="1">
    <location>
        <begin position="74"/>
        <end position="96"/>
    </location>
</feature>
<feature type="topological domain" description="Extracellular" evidence="8">
    <location>
        <begin position="97"/>
        <end position="110"/>
    </location>
</feature>
<feature type="transmembrane region" description="Helical; Name=3" evidence="1">
    <location>
        <begin position="111"/>
        <end position="133"/>
    </location>
</feature>
<feature type="topological domain" description="Cytoplasmic" evidence="8">
    <location>
        <begin position="134"/>
        <end position="152"/>
    </location>
</feature>
<feature type="transmembrane region" description="Helical; Name=4" evidence="1">
    <location>
        <begin position="153"/>
        <end position="173"/>
    </location>
</feature>
<feature type="topological domain" description="Extracellular" evidence="8">
    <location>
        <begin position="174"/>
        <end position="202"/>
    </location>
</feature>
<feature type="transmembrane region" description="Helical; Name=5" evidence="1">
    <location>
        <begin position="203"/>
        <end position="224"/>
    </location>
</feature>
<feature type="topological domain" description="Cytoplasmic" evidence="8">
    <location>
        <begin position="225"/>
        <end position="252"/>
    </location>
</feature>
<feature type="transmembrane region" description="Helical; Name=6" evidence="1">
    <location>
        <begin position="253"/>
        <end position="274"/>
    </location>
</feature>
<feature type="topological domain" description="Extracellular" evidence="8">
    <location>
        <begin position="275"/>
        <end position="286"/>
    </location>
</feature>
<feature type="transmembrane region" description="Helical; Name=7" evidence="1">
    <location>
        <begin position="287"/>
        <end position="308"/>
    </location>
</feature>
<feature type="topological domain" description="Cytoplasmic" evidence="8">
    <location>
        <begin position="309"/>
        <end position="353"/>
    </location>
</feature>
<feature type="region of interest" description="Disordered" evidence="7">
    <location>
        <begin position="331"/>
        <end position="353"/>
    </location>
</feature>
<feature type="short sequence motif" description="'Ionic lock' involved in activated form stabilization" evidence="1">
    <location>
        <begin position="134"/>
        <end position="136"/>
    </location>
</feature>
<feature type="compositionally biased region" description="Low complexity" evidence="7">
    <location>
        <begin position="334"/>
        <end position="353"/>
    </location>
</feature>
<feature type="site" description="Plays an important role in the conformation switch to the active conformation" evidence="1">
    <location>
        <position position="113"/>
    </location>
</feature>
<feature type="modified residue" description="N6-(retinylidene)lysine" evidence="1">
    <location>
        <position position="296"/>
    </location>
</feature>
<feature type="lipid moiety-binding region" description="S-palmitoyl cysteine" evidence="1">
    <location>
        <position position="322"/>
    </location>
</feature>
<feature type="lipid moiety-binding region" description="S-palmitoyl cysteine" evidence="1">
    <location>
        <position position="323"/>
    </location>
</feature>
<feature type="glycosylation site" description="N-linked (GlcNAc...) asparagine" evidence="5">
    <location>
        <position position="2"/>
    </location>
</feature>
<feature type="glycosylation site" description="N-linked (GlcNAc...) asparagine" evidence="5">
    <location>
        <position position="15"/>
    </location>
</feature>
<feature type="glycosylation site" description="N-linked (GlcNAc...) asparagine" evidence="5">
    <location>
        <position position="200"/>
    </location>
</feature>
<feature type="disulfide bond" evidence="6">
    <location>
        <begin position="110"/>
        <end position="187"/>
    </location>
</feature>
<proteinExistence type="evidence at transcript level"/>
<comment type="function">
    <text evidence="1 2 3">Photoreceptor required for image-forming vision at low light intensity. While most salt water fish species use retinal as chromophore, most freshwater fish use 3-dehydroretinal, or a mixture of retinal and 3-dehydroretinal (By similarity). Light-induced isomerization of 11-cis to all-trans retinal triggers a conformational change that activates signaling via G-proteins. Subsequent receptor phosphorylation mediates displacement of the bound G-protein alpha subunit by arrestin and terminates signaling (By similarity).</text>
</comment>
<comment type="subcellular location">
    <subcellularLocation>
        <location evidence="2">Membrane</location>
        <topology evidence="2">Multi-pass membrane protein</topology>
    </subcellularLocation>
    <subcellularLocation>
        <location evidence="4">Cell projection</location>
        <location evidence="4">Cilium</location>
        <location evidence="4">Photoreceptor outer segment</location>
    </subcellularLocation>
    <text evidence="2">Synthesized in the inner segment (IS) of rod photoreceptor cells before vectorial transport to disk membranes in the rod outer segment (OS) photosensory cilia.</text>
</comment>
<comment type="PTM">
    <text evidence="1">Phosphorylated on some or all of the serine and threonine residues present in the C-terminal region.</text>
</comment>
<comment type="PTM">
    <text evidence="1">Contains one covalently linked retinal chromophore.</text>
</comment>
<comment type="similarity">
    <text evidence="6">Belongs to the G-protein coupled receptor 1 family. Opsin subfamily.</text>
</comment>